<gene>
    <name type="primary">xis</name>
</gene>
<protein>
    <recommendedName>
        <fullName>Excisionase</fullName>
    </recommendedName>
</protein>
<comment type="function">
    <text>Excisionase and integrase are necessary for the excision of prophage from the host genome by site-specific recombination at the att site.</text>
</comment>
<organism>
    <name type="scientific">Enterobacteria phage P21</name>
    <name type="common">Bacteriophage 21</name>
    <name type="synonym">Bacteriophage P21</name>
    <dbReference type="NCBI Taxonomy" id="10711"/>
    <lineage>
        <taxon>Viruses</taxon>
        <taxon>Duplodnaviria</taxon>
        <taxon>Heunggongvirae</taxon>
        <taxon>Uroviricota</taxon>
        <taxon>Caudoviricetes</taxon>
        <taxon>Lambdavirus</taxon>
        <taxon>Lambdavirus lambda</taxon>
    </lineage>
</organism>
<dbReference type="EMBL" id="M61865">
    <property type="protein sequence ID" value="AAA32335.1"/>
    <property type="molecule type" value="Genomic_DNA"/>
</dbReference>
<dbReference type="SMR" id="P27079"/>
<dbReference type="GO" id="GO:0003677">
    <property type="term" value="F:DNA binding"/>
    <property type="evidence" value="ECO:0007669"/>
    <property type="project" value="UniProtKB-KW"/>
</dbReference>
<dbReference type="GO" id="GO:0006310">
    <property type="term" value="P:DNA recombination"/>
    <property type="evidence" value="ECO:0007669"/>
    <property type="project" value="UniProtKB-KW"/>
</dbReference>
<dbReference type="GO" id="GO:0032359">
    <property type="term" value="P:provirus excision"/>
    <property type="evidence" value="ECO:0007669"/>
    <property type="project" value="UniProtKB-KW"/>
</dbReference>
<dbReference type="Gene3D" id="1.10.1660.20">
    <property type="match status" value="1"/>
</dbReference>
<dbReference type="InterPro" id="IPR009061">
    <property type="entry name" value="DNA-bd_dom_put_sf"/>
</dbReference>
<dbReference type="InterPro" id="IPR012884">
    <property type="entry name" value="Excisionase-like"/>
</dbReference>
<dbReference type="InterPro" id="IPR038137">
    <property type="entry name" value="Excisionase-like_sf"/>
</dbReference>
<dbReference type="Pfam" id="PF07825">
    <property type="entry name" value="Exc"/>
    <property type="match status" value="1"/>
</dbReference>
<dbReference type="SUPFAM" id="SSF46955">
    <property type="entry name" value="Putative DNA-binding domain"/>
    <property type="match status" value="1"/>
</dbReference>
<organismHost>
    <name type="scientific">Escherichia coli</name>
    <dbReference type="NCBI Taxonomy" id="562"/>
</organismHost>
<sequence length="78" mass="8845">MSRLITLQDWAKEEFGDLAPSERVLKKYAQGKMMAPPAIKVGRYWMIDRNSRFVGTLAEPQLPINANPKLQRIIADGC</sequence>
<accession>P27079</accession>
<feature type="chain" id="PRO_0000077710" description="Excisionase">
    <location>
        <begin position="1"/>
        <end position="78"/>
    </location>
</feature>
<keyword id="KW-0233">DNA recombination</keyword>
<keyword id="KW-0238">DNA-binding</keyword>
<keyword id="KW-1250">Viral genome excision</keyword>
<name>VXIS_BPP21</name>
<reference key="1">
    <citation type="journal article" date="1991" name="New Biol.">
        <title>Recombination and modular exchange in the genesis of new lambdoid phages.</title>
        <authorList>
            <person name="Baker J."/>
            <person name="Limberger R."/>
            <person name="Schneider S.J."/>
            <person name="Campbell A."/>
        </authorList>
    </citation>
    <scope>NUCLEOTIDE SEQUENCE [GENOMIC DNA]</scope>
</reference>
<proteinExistence type="predicted"/>